<evidence type="ECO:0000250" key="1">
    <source>
        <dbReference type="UniProtKB" id="P67812"/>
    </source>
</evidence>
<evidence type="ECO:0000250" key="2">
    <source>
        <dbReference type="UniProtKB" id="Q12133"/>
    </source>
</evidence>
<evidence type="ECO:0000255" key="3"/>
<evidence type="ECO:0000305" key="4"/>
<comment type="function">
    <text evidence="2">Essential component of the signal peptidase complex (SPC) which catalyzes the cleavage of N-terminal signal sequences from nascent proteins as they are translocated into the lumen of the endoplasmic reticulum. Essential for the SPC catalytic activity, possibly by stabilizing and positioning the active center of the complex close to the lumenal surface. Essential for viability.</text>
</comment>
<comment type="subunit">
    <text evidence="1 2">Component of the signal peptidase complex (SPC) composed of a catalytic subunit SEC11 and three accessory subunits SPC1, SPC2 and SPC3 (By similarity). The complex induces a local thinning of the ER membrane which is used to measure the length of the signal peptide (SP) h-region of protein substrates. This ensures the selectivity of the complex towards h-regions shorter than 18-20 amino acids (By similarity). SPC associates with the translocon complex (By similarity).</text>
</comment>
<comment type="subcellular location">
    <subcellularLocation>
        <location evidence="2">Endoplasmic reticulum membrane</location>
        <topology evidence="2">Single-pass type II membrane protein</topology>
    </subcellularLocation>
</comment>
<comment type="similarity">
    <text evidence="4">Belongs to the SPCS3 family.</text>
</comment>
<sequence length="185" mass="20925">MHTSIQRIQQTFSQASTVLSIIAAIVFVVSYIQLVVANVWSLPEANFNLRGSKAARRFSRQYGANDPKKGKENVALKFDLDADLSPLFNWNTKLVFAYLTATYDGKRDDIVNEITIWDQIITDKDDSHIKLKGANSKYSLYDVEESFRNRNATVKLHWNIQPHVGAKIYGSLDATKGSIKFPQLV</sequence>
<name>SPC3_YARLI</name>
<dbReference type="EMBL" id="CR382131">
    <property type="protein sequence ID" value="CAG79946.1"/>
    <property type="molecule type" value="Genomic_DNA"/>
</dbReference>
<dbReference type="RefSeq" id="XP_504347.1">
    <property type="nucleotide sequence ID" value="XM_504347.1"/>
</dbReference>
<dbReference type="SMR" id="Q6C4R5"/>
<dbReference type="FunCoup" id="Q6C4R5">
    <property type="interactions" value="445"/>
</dbReference>
<dbReference type="STRING" id="284591.Q6C4R5"/>
<dbReference type="GlyCosmos" id="Q6C4R5">
    <property type="glycosylation" value="1 site, No reported glycans"/>
</dbReference>
<dbReference type="EnsemblFungi" id="CAG79946">
    <property type="protein sequence ID" value="CAG79946"/>
    <property type="gene ID" value="YALI0_E24321g"/>
</dbReference>
<dbReference type="KEGG" id="yli:2912544"/>
<dbReference type="VEuPathDB" id="FungiDB:YALI0_E24321g"/>
<dbReference type="HOGENOM" id="CLU_068714_2_1_1"/>
<dbReference type="InParanoid" id="Q6C4R5"/>
<dbReference type="OMA" id="LHWNIQP"/>
<dbReference type="OrthoDB" id="122192at4891"/>
<dbReference type="Proteomes" id="UP000001300">
    <property type="component" value="Chromosome E"/>
</dbReference>
<dbReference type="GO" id="GO:0005787">
    <property type="term" value="C:signal peptidase complex"/>
    <property type="evidence" value="ECO:0000318"/>
    <property type="project" value="GO_Central"/>
</dbReference>
<dbReference type="GO" id="GO:0045047">
    <property type="term" value="P:protein targeting to ER"/>
    <property type="evidence" value="ECO:0000318"/>
    <property type="project" value="GO_Central"/>
</dbReference>
<dbReference type="GO" id="GO:0006465">
    <property type="term" value="P:signal peptide processing"/>
    <property type="evidence" value="ECO:0000318"/>
    <property type="project" value="GO_Central"/>
</dbReference>
<dbReference type="InterPro" id="IPR007653">
    <property type="entry name" value="SPC3"/>
</dbReference>
<dbReference type="PANTHER" id="PTHR12804">
    <property type="entry name" value="MICROSOMAL SIGNAL PEPTIDASE 23 KD SUBUNIT SPC22/23"/>
    <property type="match status" value="1"/>
</dbReference>
<dbReference type="PANTHER" id="PTHR12804:SF0">
    <property type="entry name" value="SIGNAL PEPTIDASE COMPLEX SUBUNIT 3"/>
    <property type="match status" value="1"/>
</dbReference>
<dbReference type="Pfam" id="PF04573">
    <property type="entry name" value="SPC22"/>
    <property type="match status" value="1"/>
</dbReference>
<dbReference type="PIRSF" id="PIRSF016089">
    <property type="entry name" value="SPC22"/>
    <property type="match status" value="1"/>
</dbReference>
<feature type="chain" id="PRO_0000218950" description="Signal peptidase complex subunit 3">
    <location>
        <begin position="1"/>
        <end position="185"/>
    </location>
</feature>
<feature type="topological domain" description="Cytoplasmic" evidence="3">
    <location>
        <begin position="1"/>
        <end position="16"/>
    </location>
</feature>
<feature type="transmembrane region" description="Helical; Signal-anchor for type II membrane protein" evidence="3">
    <location>
        <begin position="17"/>
        <end position="37"/>
    </location>
</feature>
<feature type="topological domain" description="Lumenal" evidence="3">
    <location>
        <begin position="38"/>
        <end position="185"/>
    </location>
</feature>
<feature type="glycosylation site" description="N-linked (GlcNAc...) asparagine" evidence="3">
    <location>
        <position position="151"/>
    </location>
</feature>
<gene>
    <name type="primary">SPC3</name>
    <name type="ordered locus">YALI0E24321g</name>
</gene>
<proteinExistence type="inferred from homology"/>
<keyword id="KW-0256">Endoplasmic reticulum</keyword>
<keyword id="KW-0325">Glycoprotein</keyword>
<keyword id="KW-0472">Membrane</keyword>
<keyword id="KW-1185">Reference proteome</keyword>
<keyword id="KW-0735">Signal-anchor</keyword>
<keyword id="KW-0812">Transmembrane</keyword>
<keyword id="KW-1133">Transmembrane helix</keyword>
<organism>
    <name type="scientific">Yarrowia lipolytica (strain CLIB 122 / E 150)</name>
    <name type="common">Yeast</name>
    <name type="synonym">Candida lipolytica</name>
    <dbReference type="NCBI Taxonomy" id="284591"/>
    <lineage>
        <taxon>Eukaryota</taxon>
        <taxon>Fungi</taxon>
        <taxon>Dikarya</taxon>
        <taxon>Ascomycota</taxon>
        <taxon>Saccharomycotina</taxon>
        <taxon>Dipodascomycetes</taxon>
        <taxon>Dipodascales</taxon>
        <taxon>Dipodascales incertae sedis</taxon>
        <taxon>Yarrowia</taxon>
    </lineage>
</organism>
<reference key="1">
    <citation type="journal article" date="2004" name="Nature">
        <title>Genome evolution in yeasts.</title>
        <authorList>
            <person name="Dujon B."/>
            <person name="Sherman D."/>
            <person name="Fischer G."/>
            <person name="Durrens P."/>
            <person name="Casaregola S."/>
            <person name="Lafontaine I."/>
            <person name="de Montigny J."/>
            <person name="Marck C."/>
            <person name="Neuveglise C."/>
            <person name="Talla E."/>
            <person name="Goffard N."/>
            <person name="Frangeul L."/>
            <person name="Aigle M."/>
            <person name="Anthouard V."/>
            <person name="Babour A."/>
            <person name="Barbe V."/>
            <person name="Barnay S."/>
            <person name="Blanchin S."/>
            <person name="Beckerich J.-M."/>
            <person name="Beyne E."/>
            <person name="Bleykasten C."/>
            <person name="Boisrame A."/>
            <person name="Boyer J."/>
            <person name="Cattolico L."/>
            <person name="Confanioleri F."/>
            <person name="de Daruvar A."/>
            <person name="Despons L."/>
            <person name="Fabre E."/>
            <person name="Fairhead C."/>
            <person name="Ferry-Dumazet H."/>
            <person name="Groppi A."/>
            <person name="Hantraye F."/>
            <person name="Hennequin C."/>
            <person name="Jauniaux N."/>
            <person name="Joyet P."/>
            <person name="Kachouri R."/>
            <person name="Kerrest A."/>
            <person name="Koszul R."/>
            <person name="Lemaire M."/>
            <person name="Lesur I."/>
            <person name="Ma L."/>
            <person name="Muller H."/>
            <person name="Nicaud J.-M."/>
            <person name="Nikolski M."/>
            <person name="Oztas S."/>
            <person name="Ozier-Kalogeropoulos O."/>
            <person name="Pellenz S."/>
            <person name="Potier S."/>
            <person name="Richard G.-F."/>
            <person name="Straub M.-L."/>
            <person name="Suleau A."/>
            <person name="Swennen D."/>
            <person name="Tekaia F."/>
            <person name="Wesolowski-Louvel M."/>
            <person name="Westhof E."/>
            <person name="Wirth B."/>
            <person name="Zeniou-Meyer M."/>
            <person name="Zivanovic Y."/>
            <person name="Bolotin-Fukuhara M."/>
            <person name="Thierry A."/>
            <person name="Bouchier C."/>
            <person name="Caudron B."/>
            <person name="Scarpelli C."/>
            <person name="Gaillardin C."/>
            <person name="Weissenbach J."/>
            <person name="Wincker P."/>
            <person name="Souciet J.-L."/>
        </authorList>
    </citation>
    <scope>NUCLEOTIDE SEQUENCE [LARGE SCALE GENOMIC DNA]</scope>
    <source>
        <strain>CLIB 122 / E 150</strain>
    </source>
</reference>
<protein>
    <recommendedName>
        <fullName>Signal peptidase complex subunit 3</fullName>
    </recommendedName>
    <alternativeName>
        <fullName>Microsomal signal peptidase subunit 3</fullName>
    </alternativeName>
</protein>
<accession>Q6C4R5</accession>